<dbReference type="EC" id="4.1.1.23" evidence="1"/>
<dbReference type="EMBL" id="AY596297">
    <property type="protein sequence ID" value="AAV46436.1"/>
    <property type="molecule type" value="Genomic_DNA"/>
</dbReference>
<dbReference type="RefSeq" id="WP_004957213.1">
    <property type="nucleotide sequence ID" value="NZ_CP039138.1"/>
</dbReference>
<dbReference type="SMR" id="Q5V216"/>
<dbReference type="STRING" id="272569.rrnAC1515"/>
<dbReference type="PaxDb" id="272569-rrnAC1515"/>
<dbReference type="EnsemblBacteria" id="AAV46436">
    <property type="protein sequence ID" value="AAV46436"/>
    <property type="gene ID" value="rrnAC1515"/>
</dbReference>
<dbReference type="GeneID" id="64821893"/>
<dbReference type="KEGG" id="hma:rrnAC1515"/>
<dbReference type="PATRIC" id="fig|272569.17.peg.2203"/>
<dbReference type="eggNOG" id="arCOG00081">
    <property type="taxonomic scope" value="Archaea"/>
</dbReference>
<dbReference type="HOGENOM" id="CLU_060704_1_0_2"/>
<dbReference type="UniPathway" id="UPA00070">
    <property type="reaction ID" value="UER00120"/>
</dbReference>
<dbReference type="Proteomes" id="UP000001169">
    <property type="component" value="Chromosome I"/>
</dbReference>
<dbReference type="GO" id="GO:0004590">
    <property type="term" value="F:orotidine-5'-phosphate decarboxylase activity"/>
    <property type="evidence" value="ECO:0007669"/>
    <property type="project" value="UniProtKB-UniRule"/>
</dbReference>
<dbReference type="GO" id="GO:0006207">
    <property type="term" value="P:'de novo' pyrimidine nucleobase biosynthetic process"/>
    <property type="evidence" value="ECO:0007669"/>
    <property type="project" value="InterPro"/>
</dbReference>
<dbReference type="GO" id="GO:0044205">
    <property type="term" value="P:'de novo' UMP biosynthetic process"/>
    <property type="evidence" value="ECO:0007669"/>
    <property type="project" value="UniProtKB-UniRule"/>
</dbReference>
<dbReference type="CDD" id="cd04725">
    <property type="entry name" value="OMP_decarboxylase_like"/>
    <property type="match status" value="1"/>
</dbReference>
<dbReference type="Gene3D" id="3.20.20.70">
    <property type="entry name" value="Aldolase class I"/>
    <property type="match status" value="1"/>
</dbReference>
<dbReference type="HAMAP" id="MF_01215">
    <property type="entry name" value="OMPdecase_type2"/>
    <property type="match status" value="1"/>
</dbReference>
<dbReference type="InterPro" id="IPR013785">
    <property type="entry name" value="Aldolase_TIM"/>
</dbReference>
<dbReference type="InterPro" id="IPR018089">
    <property type="entry name" value="OMPdecase_AS"/>
</dbReference>
<dbReference type="InterPro" id="IPR011995">
    <property type="entry name" value="OMPdecase_type-2"/>
</dbReference>
<dbReference type="InterPro" id="IPR001754">
    <property type="entry name" value="OMPdeCOase_dom"/>
</dbReference>
<dbReference type="InterPro" id="IPR011060">
    <property type="entry name" value="RibuloseP-bd_barrel"/>
</dbReference>
<dbReference type="NCBIfam" id="TIGR02127">
    <property type="entry name" value="pyrF_sub2"/>
    <property type="match status" value="1"/>
</dbReference>
<dbReference type="PANTHER" id="PTHR43375">
    <property type="entry name" value="OROTIDINE 5'-PHOSPHATE DECARBOXYLASE"/>
    <property type="match status" value="1"/>
</dbReference>
<dbReference type="PANTHER" id="PTHR43375:SF1">
    <property type="entry name" value="OROTIDINE 5'-PHOSPHATE DECARBOXYLASE"/>
    <property type="match status" value="1"/>
</dbReference>
<dbReference type="Pfam" id="PF00215">
    <property type="entry name" value="OMPdecase"/>
    <property type="match status" value="1"/>
</dbReference>
<dbReference type="SMART" id="SM00934">
    <property type="entry name" value="OMPdecase"/>
    <property type="match status" value="1"/>
</dbReference>
<dbReference type="SUPFAM" id="SSF51366">
    <property type="entry name" value="Ribulose-phoshate binding barrel"/>
    <property type="match status" value="1"/>
</dbReference>
<dbReference type="PROSITE" id="PS00156">
    <property type="entry name" value="OMPDECASE"/>
    <property type="match status" value="1"/>
</dbReference>
<gene>
    <name evidence="1" type="primary">pyrF</name>
    <name type="ordered locus">rrnAC1515</name>
</gene>
<proteinExistence type="inferred from homology"/>
<accession>Q5V216</accession>
<protein>
    <recommendedName>
        <fullName evidence="1">Orotidine 5'-phosphate decarboxylase</fullName>
        <ecNumber evidence="1">4.1.1.23</ecNumber>
    </recommendedName>
    <alternativeName>
        <fullName evidence="1">OMP decarboxylase</fullName>
        <shortName evidence="1">OMPDCase</shortName>
        <shortName evidence="1">OMPdecase</shortName>
    </alternativeName>
</protein>
<sequence length="277" mass="29996">MHFFDRLADRIATADSVVSVGLDPDPARLPDSVLDADLPRWQFNRRIIDATHEHAACYKPNAAFYEDPDGWRALEETIAYAHGKNVPVLLDAKRGDIGNTARQYAQILDEDEGPAADAITVNPFLGRDSLEPFLQRADRGVFVLGRTSNPGGEDLQDLELASGEKLYERVVHLADLWNGNGNVGLVVGATNPDELEEIRELVPDIPFLVPGVGAQGGDAEAAVEHGLADGVGLVNSSRGIIFAGEDAATRRDDSGDAFFKAAGQSAKQLKQRLNQFR</sequence>
<keyword id="KW-0210">Decarboxylase</keyword>
<keyword id="KW-0456">Lyase</keyword>
<keyword id="KW-0665">Pyrimidine biosynthesis</keyword>
<keyword id="KW-1185">Reference proteome</keyword>
<comment type="catalytic activity">
    <reaction evidence="1">
        <text>orotidine 5'-phosphate + H(+) = UMP + CO2</text>
        <dbReference type="Rhea" id="RHEA:11596"/>
        <dbReference type="ChEBI" id="CHEBI:15378"/>
        <dbReference type="ChEBI" id="CHEBI:16526"/>
        <dbReference type="ChEBI" id="CHEBI:57538"/>
        <dbReference type="ChEBI" id="CHEBI:57865"/>
        <dbReference type="EC" id="4.1.1.23"/>
    </reaction>
</comment>
<comment type="pathway">
    <text evidence="1">Pyrimidine metabolism; UMP biosynthesis via de novo pathway; UMP from orotate: step 2/2.</text>
</comment>
<comment type="similarity">
    <text evidence="1">Belongs to the OMP decarboxylase family. Type 2 subfamily.</text>
</comment>
<reference key="1">
    <citation type="journal article" date="2004" name="Genome Res.">
        <title>Genome sequence of Haloarcula marismortui: a halophilic archaeon from the Dead Sea.</title>
        <authorList>
            <person name="Baliga N.S."/>
            <person name="Bonneau R."/>
            <person name="Facciotti M.T."/>
            <person name="Pan M."/>
            <person name="Glusman G."/>
            <person name="Deutsch E.W."/>
            <person name="Shannon P."/>
            <person name="Chiu Y."/>
            <person name="Weng R.S."/>
            <person name="Gan R.R."/>
            <person name="Hung P."/>
            <person name="Date S.V."/>
            <person name="Marcotte E."/>
            <person name="Hood L."/>
            <person name="Ng W.V."/>
        </authorList>
    </citation>
    <scope>NUCLEOTIDE SEQUENCE [LARGE SCALE GENOMIC DNA]</scope>
    <source>
        <strain>ATCC 43049 / DSM 3752 / JCM 8966 / VKM B-1809</strain>
    </source>
</reference>
<name>PYRF_HALMA</name>
<feature type="chain" id="PRO_1000066472" description="Orotidine 5'-phosphate decarboxylase">
    <location>
        <begin position="1"/>
        <end position="277"/>
    </location>
</feature>
<feature type="active site" description="Proton donor" evidence="1">
    <location>
        <position position="93"/>
    </location>
</feature>
<evidence type="ECO:0000255" key="1">
    <source>
        <dbReference type="HAMAP-Rule" id="MF_01215"/>
    </source>
</evidence>
<organism>
    <name type="scientific">Haloarcula marismortui (strain ATCC 43049 / DSM 3752 / JCM 8966 / VKM B-1809)</name>
    <name type="common">Halobacterium marismortui</name>
    <dbReference type="NCBI Taxonomy" id="272569"/>
    <lineage>
        <taxon>Archaea</taxon>
        <taxon>Methanobacteriati</taxon>
        <taxon>Methanobacteriota</taxon>
        <taxon>Stenosarchaea group</taxon>
        <taxon>Halobacteria</taxon>
        <taxon>Halobacteriales</taxon>
        <taxon>Haloarculaceae</taxon>
        <taxon>Haloarcula</taxon>
    </lineage>
</organism>